<sequence length="624" mass="71062">MKGQETRGFQSEVKQLLHLMIHSLYSNKEIFLRELISNASDAADKLRFRALSSPDLYEGDGDLRVRVSFDKDKRTLTIADNGIGMTRDEVIDHLGTIAKSGTKAFLESMGSDQAKDSQLIGQFGVGFYSAFIVADKVTVRTRAAGVSADEAVFWESEGEGEYTVADISKADRGTEITLHLREGEDEFLNDWRVRSIISKYSDHIALPVEIETREEKDGETIVSWEKINKAQALWTRSKGEVSDDEYKAFYKHIAHDFTDPLTWSHNRVEGKQEYTSLLYIPSQAPWDMWNRDHKHGLKLYVQRVFIMDDAEQFMPNYLRFVRGLIDSNDLPLNVSREILQDSSITRNLRSALTKRVLQMLEKLAKDDAEKYQTFWKQFGLVLKEGPAEDSANQEAIAKLLRFASTHTDSAAQTVSLADYVSRMKEGQEKIYYITADSYAAAKSSPHLELLRKKGIEVLLLSDRIDEWMMSYLTEFDGKAFQSVAKADESLEKLADEVDESAKEAEKALEPFVERVKTLLGDRVKEVRLTHRLTDTPAIVTTDNDEMSTQMAKLFAAAGQAVPEVKYIFELNPDHQLVKRTADTQDEAQFKEWVELLLDQALFAERGTLEDPNQFIRRMNQLLVS</sequence>
<name>HTPG_CROS8</name>
<gene>
    <name evidence="1" type="primary">htpG</name>
    <name type="ordered locus">ESA_02793</name>
</gene>
<keyword id="KW-0067">ATP-binding</keyword>
<keyword id="KW-0143">Chaperone</keyword>
<keyword id="KW-0963">Cytoplasm</keyword>
<keyword id="KW-0547">Nucleotide-binding</keyword>
<keyword id="KW-1185">Reference proteome</keyword>
<keyword id="KW-0346">Stress response</keyword>
<comment type="function">
    <text evidence="1">Molecular chaperone. Has ATPase activity.</text>
</comment>
<comment type="subunit">
    <text evidence="1">Homodimer.</text>
</comment>
<comment type="subcellular location">
    <subcellularLocation>
        <location evidence="1">Cytoplasm</location>
    </subcellularLocation>
</comment>
<comment type="similarity">
    <text evidence="1">Belongs to the heat shock protein 90 family.</text>
</comment>
<feature type="chain" id="PRO_1000014915" description="Chaperone protein HtpG">
    <location>
        <begin position="1"/>
        <end position="624"/>
    </location>
</feature>
<feature type="region of interest" description="A; substrate-binding" evidence="1">
    <location>
        <begin position="1"/>
        <end position="336"/>
    </location>
</feature>
<feature type="region of interest" description="B" evidence="1">
    <location>
        <begin position="337"/>
        <end position="552"/>
    </location>
</feature>
<feature type="region of interest" description="C" evidence="1">
    <location>
        <begin position="553"/>
        <end position="624"/>
    </location>
</feature>
<reference key="1">
    <citation type="journal article" date="2010" name="PLoS ONE">
        <title>Genome sequence of Cronobacter sakazakii BAA-894 and comparative genomic hybridization analysis with other Cronobacter species.</title>
        <authorList>
            <person name="Kucerova E."/>
            <person name="Clifton S.W."/>
            <person name="Xia X.Q."/>
            <person name="Long F."/>
            <person name="Porwollik S."/>
            <person name="Fulton L."/>
            <person name="Fronick C."/>
            <person name="Minx P."/>
            <person name="Kyung K."/>
            <person name="Warren W."/>
            <person name="Fulton R."/>
            <person name="Feng D."/>
            <person name="Wollam A."/>
            <person name="Shah N."/>
            <person name="Bhonagiri V."/>
            <person name="Nash W.E."/>
            <person name="Hallsworth-Pepin K."/>
            <person name="Wilson R.K."/>
            <person name="McClelland M."/>
            <person name="Forsythe S.J."/>
        </authorList>
    </citation>
    <scope>NUCLEOTIDE SEQUENCE [LARGE SCALE GENOMIC DNA]</scope>
    <source>
        <strain>ATCC BAA-894</strain>
    </source>
</reference>
<evidence type="ECO:0000255" key="1">
    <source>
        <dbReference type="HAMAP-Rule" id="MF_00505"/>
    </source>
</evidence>
<dbReference type="EMBL" id="CP000783">
    <property type="protein sequence ID" value="ABU78023.1"/>
    <property type="molecule type" value="Genomic_DNA"/>
</dbReference>
<dbReference type="RefSeq" id="WP_012125442.1">
    <property type="nucleotide sequence ID" value="NC_009778.1"/>
</dbReference>
<dbReference type="SMR" id="A7MJW4"/>
<dbReference type="KEGG" id="esa:ESA_02793"/>
<dbReference type="PATRIC" id="fig|290339.8.peg.2485"/>
<dbReference type="HOGENOM" id="CLU_006684_3_0_6"/>
<dbReference type="Proteomes" id="UP000000260">
    <property type="component" value="Chromosome"/>
</dbReference>
<dbReference type="GO" id="GO:0005737">
    <property type="term" value="C:cytoplasm"/>
    <property type="evidence" value="ECO:0007669"/>
    <property type="project" value="UniProtKB-SubCell"/>
</dbReference>
<dbReference type="GO" id="GO:0005524">
    <property type="term" value="F:ATP binding"/>
    <property type="evidence" value="ECO:0007669"/>
    <property type="project" value="UniProtKB-UniRule"/>
</dbReference>
<dbReference type="GO" id="GO:0016887">
    <property type="term" value="F:ATP hydrolysis activity"/>
    <property type="evidence" value="ECO:0007669"/>
    <property type="project" value="InterPro"/>
</dbReference>
<dbReference type="GO" id="GO:0140662">
    <property type="term" value="F:ATP-dependent protein folding chaperone"/>
    <property type="evidence" value="ECO:0007669"/>
    <property type="project" value="InterPro"/>
</dbReference>
<dbReference type="GO" id="GO:0051082">
    <property type="term" value="F:unfolded protein binding"/>
    <property type="evidence" value="ECO:0007669"/>
    <property type="project" value="UniProtKB-UniRule"/>
</dbReference>
<dbReference type="CDD" id="cd16927">
    <property type="entry name" value="HATPase_Hsp90-like"/>
    <property type="match status" value="1"/>
</dbReference>
<dbReference type="FunFam" id="1.20.120.790:FF:000002">
    <property type="entry name" value="Molecular chaperone HtpG"/>
    <property type="match status" value="1"/>
</dbReference>
<dbReference type="FunFam" id="3.30.230.80:FF:000002">
    <property type="entry name" value="Molecular chaperone HtpG"/>
    <property type="match status" value="1"/>
</dbReference>
<dbReference type="FunFam" id="3.30.565.10:FF:000009">
    <property type="entry name" value="Molecular chaperone HtpG"/>
    <property type="match status" value="1"/>
</dbReference>
<dbReference type="FunFam" id="3.40.50.11260:FF:000002">
    <property type="entry name" value="Molecular chaperone HtpG"/>
    <property type="match status" value="1"/>
</dbReference>
<dbReference type="Gene3D" id="3.30.230.80">
    <property type="match status" value="1"/>
</dbReference>
<dbReference type="Gene3D" id="3.40.50.11260">
    <property type="match status" value="1"/>
</dbReference>
<dbReference type="Gene3D" id="1.20.120.790">
    <property type="entry name" value="Heat shock protein 90, C-terminal domain"/>
    <property type="match status" value="1"/>
</dbReference>
<dbReference type="Gene3D" id="3.30.565.10">
    <property type="entry name" value="Histidine kinase-like ATPase, C-terminal domain"/>
    <property type="match status" value="1"/>
</dbReference>
<dbReference type="HAMAP" id="MF_00505">
    <property type="entry name" value="HSP90"/>
    <property type="match status" value="1"/>
</dbReference>
<dbReference type="InterPro" id="IPR036890">
    <property type="entry name" value="HATPase_C_sf"/>
</dbReference>
<dbReference type="InterPro" id="IPR019805">
    <property type="entry name" value="Heat_shock_protein_90_CS"/>
</dbReference>
<dbReference type="InterPro" id="IPR037196">
    <property type="entry name" value="HSP90_C"/>
</dbReference>
<dbReference type="InterPro" id="IPR001404">
    <property type="entry name" value="Hsp90_fam"/>
</dbReference>
<dbReference type="InterPro" id="IPR020575">
    <property type="entry name" value="Hsp90_N"/>
</dbReference>
<dbReference type="InterPro" id="IPR020568">
    <property type="entry name" value="Ribosomal_Su5_D2-typ_SF"/>
</dbReference>
<dbReference type="NCBIfam" id="NF003555">
    <property type="entry name" value="PRK05218.1"/>
    <property type="match status" value="1"/>
</dbReference>
<dbReference type="PANTHER" id="PTHR11528">
    <property type="entry name" value="HEAT SHOCK PROTEIN 90 FAMILY MEMBER"/>
    <property type="match status" value="1"/>
</dbReference>
<dbReference type="Pfam" id="PF13589">
    <property type="entry name" value="HATPase_c_3"/>
    <property type="match status" value="1"/>
</dbReference>
<dbReference type="Pfam" id="PF00183">
    <property type="entry name" value="HSP90"/>
    <property type="match status" value="1"/>
</dbReference>
<dbReference type="PIRSF" id="PIRSF002583">
    <property type="entry name" value="Hsp90"/>
    <property type="match status" value="1"/>
</dbReference>
<dbReference type="PRINTS" id="PR00775">
    <property type="entry name" value="HEATSHOCK90"/>
</dbReference>
<dbReference type="SMART" id="SM00387">
    <property type="entry name" value="HATPase_c"/>
    <property type="match status" value="1"/>
</dbReference>
<dbReference type="SUPFAM" id="SSF55874">
    <property type="entry name" value="ATPase domain of HSP90 chaperone/DNA topoisomerase II/histidine kinase"/>
    <property type="match status" value="1"/>
</dbReference>
<dbReference type="SUPFAM" id="SSF110942">
    <property type="entry name" value="HSP90 C-terminal domain"/>
    <property type="match status" value="1"/>
</dbReference>
<dbReference type="SUPFAM" id="SSF54211">
    <property type="entry name" value="Ribosomal protein S5 domain 2-like"/>
    <property type="match status" value="1"/>
</dbReference>
<dbReference type="PROSITE" id="PS00298">
    <property type="entry name" value="HSP90"/>
    <property type="match status" value="1"/>
</dbReference>
<proteinExistence type="inferred from homology"/>
<accession>A7MJW4</accession>
<organism>
    <name type="scientific">Cronobacter sakazakii (strain ATCC BAA-894)</name>
    <name type="common">Enterobacter sakazakii</name>
    <dbReference type="NCBI Taxonomy" id="290339"/>
    <lineage>
        <taxon>Bacteria</taxon>
        <taxon>Pseudomonadati</taxon>
        <taxon>Pseudomonadota</taxon>
        <taxon>Gammaproteobacteria</taxon>
        <taxon>Enterobacterales</taxon>
        <taxon>Enterobacteriaceae</taxon>
        <taxon>Cronobacter</taxon>
    </lineage>
</organism>
<protein>
    <recommendedName>
        <fullName evidence="1">Chaperone protein HtpG</fullName>
    </recommendedName>
    <alternativeName>
        <fullName evidence="1">Heat shock protein HtpG</fullName>
    </alternativeName>
    <alternativeName>
        <fullName evidence="1">High temperature protein G</fullName>
    </alternativeName>
</protein>